<dbReference type="EC" id="3.1.1.29" evidence="1 2"/>
<dbReference type="EMBL" id="CP000647">
    <property type="protein sequence ID" value="ABR77668.1"/>
    <property type="molecule type" value="Genomic_DNA"/>
</dbReference>
<dbReference type="RefSeq" id="WP_004180389.1">
    <property type="nucleotide sequence ID" value="NC_009648.1"/>
</dbReference>
<dbReference type="PDB" id="7BRD">
    <property type="method" value="X-ray"/>
    <property type="resolution" value="1.89 A"/>
    <property type="chains" value="A/B=1-194"/>
</dbReference>
<dbReference type="PDBsum" id="7BRD"/>
<dbReference type="SMR" id="A6TAP7"/>
<dbReference type="STRING" id="272620.KPN_02242"/>
<dbReference type="PaxDb" id="272620-KPN_02242"/>
<dbReference type="EnsemblBacteria" id="ABR77668">
    <property type="protein sequence ID" value="ABR77668"/>
    <property type="gene ID" value="KPN_02242"/>
</dbReference>
<dbReference type="KEGG" id="kpn:KPN_02242"/>
<dbReference type="HOGENOM" id="CLU_062456_3_1_6"/>
<dbReference type="Proteomes" id="UP000000265">
    <property type="component" value="Chromosome"/>
</dbReference>
<dbReference type="GO" id="GO:0005737">
    <property type="term" value="C:cytoplasm"/>
    <property type="evidence" value="ECO:0007669"/>
    <property type="project" value="UniProtKB-SubCell"/>
</dbReference>
<dbReference type="GO" id="GO:0004045">
    <property type="term" value="F:peptidyl-tRNA hydrolase activity"/>
    <property type="evidence" value="ECO:0007669"/>
    <property type="project" value="UniProtKB-UniRule"/>
</dbReference>
<dbReference type="GO" id="GO:0000049">
    <property type="term" value="F:tRNA binding"/>
    <property type="evidence" value="ECO:0007669"/>
    <property type="project" value="UniProtKB-UniRule"/>
</dbReference>
<dbReference type="GO" id="GO:0006515">
    <property type="term" value="P:protein quality control for misfolded or incompletely synthesized proteins"/>
    <property type="evidence" value="ECO:0007669"/>
    <property type="project" value="UniProtKB-UniRule"/>
</dbReference>
<dbReference type="GO" id="GO:0072344">
    <property type="term" value="P:rescue of stalled ribosome"/>
    <property type="evidence" value="ECO:0007669"/>
    <property type="project" value="UniProtKB-UniRule"/>
</dbReference>
<dbReference type="CDD" id="cd00462">
    <property type="entry name" value="PTH"/>
    <property type="match status" value="1"/>
</dbReference>
<dbReference type="FunFam" id="3.40.50.1470:FF:000001">
    <property type="entry name" value="Peptidyl-tRNA hydrolase"/>
    <property type="match status" value="1"/>
</dbReference>
<dbReference type="Gene3D" id="3.40.50.1470">
    <property type="entry name" value="Peptidyl-tRNA hydrolase"/>
    <property type="match status" value="1"/>
</dbReference>
<dbReference type="HAMAP" id="MF_00083">
    <property type="entry name" value="Pept_tRNA_hydro_bact"/>
    <property type="match status" value="1"/>
</dbReference>
<dbReference type="InterPro" id="IPR001328">
    <property type="entry name" value="Pept_tRNA_hydro"/>
</dbReference>
<dbReference type="InterPro" id="IPR018171">
    <property type="entry name" value="Pept_tRNA_hydro_CS"/>
</dbReference>
<dbReference type="InterPro" id="IPR036416">
    <property type="entry name" value="Pept_tRNA_hydro_sf"/>
</dbReference>
<dbReference type="NCBIfam" id="TIGR00447">
    <property type="entry name" value="pth"/>
    <property type="match status" value="1"/>
</dbReference>
<dbReference type="PANTHER" id="PTHR17224">
    <property type="entry name" value="PEPTIDYL-TRNA HYDROLASE"/>
    <property type="match status" value="1"/>
</dbReference>
<dbReference type="PANTHER" id="PTHR17224:SF1">
    <property type="entry name" value="PEPTIDYL-TRNA HYDROLASE"/>
    <property type="match status" value="1"/>
</dbReference>
<dbReference type="Pfam" id="PF01195">
    <property type="entry name" value="Pept_tRNA_hydro"/>
    <property type="match status" value="1"/>
</dbReference>
<dbReference type="SUPFAM" id="SSF53178">
    <property type="entry name" value="Peptidyl-tRNA hydrolase-like"/>
    <property type="match status" value="1"/>
</dbReference>
<dbReference type="PROSITE" id="PS01195">
    <property type="entry name" value="PEPT_TRNA_HYDROL_1"/>
    <property type="match status" value="1"/>
</dbReference>
<dbReference type="PROSITE" id="PS01196">
    <property type="entry name" value="PEPT_TRNA_HYDROL_2"/>
    <property type="match status" value="1"/>
</dbReference>
<keyword id="KW-0002">3D-structure</keyword>
<keyword id="KW-0963">Cytoplasm</keyword>
<keyword id="KW-0378">Hydrolase</keyword>
<keyword id="KW-0694">RNA-binding</keyword>
<keyword id="KW-0820">tRNA-binding</keyword>
<sequence length="194" mass="21100">MTIKLIVGLANPGAEYAATRHNAGAWYVDLLADRHRAPLREESKFFGYTSRINLAGEDVRLLVPTTFMNLSGKAVAAMATFYRINPDEILVAHDELDLPPGVAKFKLGGGHGGHNGLKDIISKLGNNPNFHRLRVGIGHPGDKNKVVGFVLGKPPASEQKLIDDAVDEAARCTEIWLKDGLTKATNRLHAFKAQ</sequence>
<name>PTH_KLEP7</name>
<comment type="function">
    <text evidence="1">Hydrolyzes ribosome-free peptidyl-tRNAs (with 1 or more amino acids incorporated), which drop off the ribosome during protein synthesis, or as a result of ribosome stalling.</text>
</comment>
<comment type="function">
    <text evidence="1">Catalyzes the release of premature peptidyl moieties from peptidyl-tRNA molecules trapped in stalled 50S ribosomal subunits, and thus maintains levels of free tRNAs and 50S ribosomes.</text>
</comment>
<comment type="catalytic activity">
    <reaction evidence="1 2">
        <text>an N-acyl-L-alpha-aminoacyl-tRNA + H2O = an N-acyl-L-amino acid + a tRNA + H(+)</text>
        <dbReference type="Rhea" id="RHEA:54448"/>
        <dbReference type="Rhea" id="RHEA-COMP:10123"/>
        <dbReference type="Rhea" id="RHEA-COMP:13883"/>
        <dbReference type="ChEBI" id="CHEBI:15377"/>
        <dbReference type="ChEBI" id="CHEBI:15378"/>
        <dbReference type="ChEBI" id="CHEBI:59874"/>
        <dbReference type="ChEBI" id="CHEBI:78442"/>
        <dbReference type="ChEBI" id="CHEBI:138191"/>
        <dbReference type="EC" id="3.1.1.29"/>
    </reaction>
</comment>
<comment type="biophysicochemical properties">
    <kinetics>
        <KM evidence="2">126.3 nM for fluorescent (boron-dipyrromethene (BODIPY) labeled) lysyl-tRNA(Lys3)</KM>
    </kinetics>
</comment>
<comment type="subunit">
    <text evidence="1 2">Monomer.</text>
</comment>
<comment type="subcellular location">
    <subcellularLocation>
        <location evidence="1">Cytoplasm</location>
    </subcellularLocation>
</comment>
<comment type="similarity">
    <text evidence="1">Belongs to the PTH family.</text>
</comment>
<organism>
    <name type="scientific">Klebsiella pneumoniae subsp. pneumoniae (strain ATCC 700721 / MGH 78578)</name>
    <dbReference type="NCBI Taxonomy" id="272620"/>
    <lineage>
        <taxon>Bacteria</taxon>
        <taxon>Pseudomonadati</taxon>
        <taxon>Pseudomonadota</taxon>
        <taxon>Gammaproteobacteria</taxon>
        <taxon>Enterobacterales</taxon>
        <taxon>Enterobacteriaceae</taxon>
        <taxon>Klebsiella/Raoultella group</taxon>
        <taxon>Klebsiella</taxon>
        <taxon>Klebsiella pneumoniae complex</taxon>
    </lineage>
</organism>
<protein>
    <recommendedName>
        <fullName evidence="1 3">Peptidyl-tRNA hydrolase</fullName>
        <shortName evidence="1 3">Pth</shortName>
        <ecNumber evidence="1 2">3.1.1.29</ecNumber>
    </recommendedName>
</protein>
<feature type="chain" id="PRO_1000010597" description="Peptidyl-tRNA hydrolase">
    <location>
        <begin position="1"/>
        <end position="194"/>
    </location>
</feature>
<feature type="active site" description="Proton acceptor" evidence="1">
    <location>
        <position position="21"/>
    </location>
</feature>
<feature type="binding site" evidence="1">
    <location>
        <position position="16"/>
    </location>
    <ligand>
        <name>tRNA</name>
        <dbReference type="ChEBI" id="CHEBI:17843"/>
    </ligand>
</feature>
<feature type="binding site" evidence="1">
    <location>
        <position position="67"/>
    </location>
    <ligand>
        <name>tRNA</name>
        <dbReference type="ChEBI" id="CHEBI:17843"/>
    </ligand>
</feature>
<feature type="binding site" evidence="1">
    <location>
        <position position="69"/>
    </location>
    <ligand>
        <name>tRNA</name>
        <dbReference type="ChEBI" id="CHEBI:17843"/>
    </ligand>
</feature>
<feature type="binding site" evidence="1">
    <location>
        <position position="115"/>
    </location>
    <ligand>
        <name>tRNA</name>
        <dbReference type="ChEBI" id="CHEBI:17843"/>
    </ligand>
</feature>
<feature type="site" description="Discriminates between blocked and unblocked aminoacyl-tRNA" evidence="1">
    <location>
        <position position="11"/>
    </location>
</feature>
<feature type="site" description="Stabilizes the basic form of H active site to accept a proton" evidence="1">
    <location>
        <position position="94"/>
    </location>
</feature>
<feature type="strand" evidence="5">
    <location>
        <begin position="5"/>
        <end position="8"/>
    </location>
</feature>
<feature type="helix" evidence="5">
    <location>
        <begin position="14"/>
        <end position="17"/>
    </location>
</feature>
<feature type="helix" evidence="5">
    <location>
        <begin position="20"/>
        <end position="22"/>
    </location>
</feature>
<feature type="helix" evidence="5">
    <location>
        <begin position="23"/>
        <end position="34"/>
    </location>
</feature>
<feature type="strand" evidence="5">
    <location>
        <begin position="40"/>
        <end position="42"/>
    </location>
</feature>
<feature type="helix" evidence="5">
    <location>
        <begin position="43"/>
        <end position="45"/>
    </location>
</feature>
<feature type="strand" evidence="5">
    <location>
        <begin position="47"/>
        <end position="54"/>
    </location>
</feature>
<feature type="strand" evidence="5">
    <location>
        <begin position="57"/>
        <end position="64"/>
    </location>
</feature>
<feature type="helix" evidence="5">
    <location>
        <begin position="68"/>
        <end position="70"/>
    </location>
</feature>
<feature type="helix" evidence="5">
    <location>
        <begin position="71"/>
        <end position="81"/>
    </location>
</feature>
<feature type="helix" evidence="5">
    <location>
        <begin position="86"/>
        <end position="88"/>
    </location>
</feature>
<feature type="strand" evidence="5">
    <location>
        <begin position="89"/>
        <end position="95"/>
    </location>
</feature>
<feature type="strand" evidence="5">
    <location>
        <begin position="103"/>
        <end position="108"/>
    </location>
</feature>
<feature type="helix" evidence="5">
    <location>
        <begin position="115"/>
        <end position="123"/>
    </location>
</feature>
<feature type="strand" evidence="5">
    <location>
        <begin position="130"/>
        <end position="136"/>
    </location>
</feature>
<feature type="helix" evidence="5">
    <location>
        <begin position="143"/>
        <end position="145"/>
    </location>
</feature>
<feature type="helix" evidence="5">
    <location>
        <begin position="146"/>
        <end position="150"/>
    </location>
</feature>
<feature type="helix" evidence="5">
    <location>
        <begin position="156"/>
        <end position="179"/>
    </location>
</feature>
<feature type="helix" evidence="5">
    <location>
        <begin position="181"/>
        <end position="188"/>
    </location>
</feature>
<feature type="turn" evidence="5">
    <location>
        <begin position="189"/>
        <end position="193"/>
    </location>
</feature>
<gene>
    <name evidence="1" type="primary">pth</name>
    <name type="ordered locus">KPN78578_22070</name>
    <name type="ORF">KPN_02242</name>
</gene>
<evidence type="ECO:0000255" key="1">
    <source>
        <dbReference type="HAMAP-Rule" id="MF_00083"/>
    </source>
</evidence>
<evidence type="ECO:0000269" key="2">
    <source>
    </source>
</evidence>
<evidence type="ECO:0000303" key="3">
    <source>
    </source>
</evidence>
<evidence type="ECO:0007744" key="4">
    <source>
        <dbReference type="PDB" id="7BRD"/>
    </source>
</evidence>
<evidence type="ECO:0007829" key="5">
    <source>
        <dbReference type="PDB" id="7BRD"/>
    </source>
</evidence>
<proteinExistence type="evidence at protein level"/>
<accession>A6TAP7</accession>
<reference key="1">
    <citation type="submission" date="2006-09" db="EMBL/GenBank/DDBJ databases">
        <authorList>
            <consortium name="The Klebsiella pneumonia Genome Sequencing Project"/>
            <person name="McClelland M."/>
            <person name="Sanderson E.K."/>
            <person name="Spieth J."/>
            <person name="Clifton W.S."/>
            <person name="Latreille P."/>
            <person name="Sabo A."/>
            <person name="Pepin K."/>
            <person name="Bhonagiri V."/>
            <person name="Porwollik S."/>
            <person name="Ali J."/>
            <person name="Wilson R.K."/>
        </authorList>
    </citation>
    <scope>NUCLEOTIDE SEQUENCE [LARGE SCALE GENOMIC DNA]</scope>
    <source>
        <strain>ATCC 700721 / MGH 78578</strain>
    </source>
</reference>
<reference evidence="4" key="2">
    <citation type="journal article" date="2021" name="Biochim. Biophys. Acta">
        <title>Structural and functional characterization of peptidyl-tRNA hydrolase from Klebsiella pneumoniae.</title>
        <authorList>
            <person name="Mundra S."/>
            <person name="Pal R.K."/>
            <person name="Tripathi S."/>
            <person name="Jain A."/>
            <person name="Arora A."/>
        </authorList>
    </citation>
    <scope>X-RAY CRYSTALLOGRAPHY (1.89 ANGSTROMS)</scope>
    <scope>FUNCTION</scope>
    <scope>CATALYTIC ACTIVITY</scope>
    <scope>BIOPHYSICOCHEMICAL PROPERTIES</scope>
    <scope>SUBUNIT</scope>
</reference>